<name>RL333_STAAR</name>
<accession>Q6GJD4</accession>
<keyword id="KW-0687">Ribonucleoprotein</keyword>
<keyword id="KW-0689">Ribosomal protein</keyword>
<proteinExistence type="inferred from homology"/>
<reference key="1">
    <citation type="journal article" date="2004" name="Proc. Natl. Acad. Sci. U.S.A.">
        <title>Complete genomes of two clinical Staphylococcus aureus strains: evidence for the rapid evolution of virulence and drug resistance.</title>
        <authorList>
            <person name="Holden M.T.G."/>
            <person name="Feil E.J."/>
            <person name="Lindsay J.A."/>
            <person name="Peacock S.J."/>
            <person name="Day N.P.J."/>
            <person name="Enright M.C."/>
            <person name="Foster T.J."/>
            <person name="Moore C.E."/>
            <person name="Hurst L."/>
            <person name="Atkin R."/>
            <person name="Barron A."/>
            <person name="Bason N."/>
            <person name="Bentley S.D."/>
            <person name="Chillingworth C."/>
            <person name="Chillingworth T."/>
            <person name="Churcher C."/>
            <person name="Clark L."/>
            <person name="Corton C."/>
            <person name="Cronin A."/>
            <person name="Doggett J."/>
            <person name="Dowd L."/>
            <person name="Feltwell T."/>
            <person name="Hance Z."/>
            <person name="Harris B."/>
            <person name="Hauser H."/>
            <person name="Holroyd S."/>
            <person name="Jagels K."/>
            <person name="James K.D."/>
            <person name="Lennard N."/>
            <person name="Line A."/>
            <person name="Mayes R."/>
            <person name="Moule S."/>
            <person name="Mungall K."/>
            <person name="Ormond D."/>
            <person name="Quail M.A."/>
            <person name="Rabbinowitsch E."/>
            <person name="Rutherford K.M."/>
            <person name="Sanders M."/>
            <person name="Sharp S."/>
            <person name="Simmonds M."/>
            <person name="Stevens K."/>
            <person name="Whitehead S."/>
            <person name="Barrell B.G."/>
            <person name="Spratt B.G."/>
            <person name="Parkhill J."/>
        </authorList>
    </citation>
    <scope>NUCLEOTIDE SEQUENCE [LARGE SCALE GENOMIC DNA]</scope>
    <source>
        <strain>MRSA252</strain>
    </source>
</reference>
<feature type="chain" id="PRO_0000170221" description="Large ribosomal subunit protein bL33C">
    <location>
        <begin position="1"/>
        <end position="47"/>
    </location>
</feature>
<comment type="similarity">
    <text evidence="1">Belongs to the bacterial ribosomal protein bL33 family.</text>
</comment>
<evidence type="ECO:0000255" key="1">
    <source>
        <dbReference type="HAMAP-Rule" id="MF_00294"/>
    </source>
</evidence>
<organism>
    <name type="scientific">Staphylococcus aureus (strain MRSA252)</name>
    <dbReference type="NCBI Taxonomy" id="282458"/>
    <lineage>
        <taxon>Bacteria</taxon>
        <taxon>Bacillati</taxon>
        <taxon>Bacillota</taxon>
        <taxon>Bacilli</taxon>
        <taxon>Bacillales</taxon>
        <taxon>Staphylococcaceae</taxon>
        <taxon>Staphylococcus</taxon>
    </lineage>
</organism>
<protein>
    <recommendedName>
        <fullName evidence="1">Large ribosomal subunit protein bL33C</fullName>
    </recommendedName>
    <alternativeName>
        <fullName evidence="1">50S ribosomal protein L33 3</fullName>
    </alternativeName>
</protein>
<sequence>MRKIPLNCEACGNRNYNVPKQEGTATRLTLKKYCPKCNAHTIHKESK</sequence>
<gene>
    <name evidence="1" type="primary">rpmG3</name>
    <name type="ordered locus">SAR0538</name>
</gene>
<dbReference type="EMBL" id="BX571856">
    <property type="protein sequence ID" value="CAG39560.1"/>
    <property type="molecule type" value="Genomic_DNA"/>
</dbReference>
<dbReference type="SMR" id="Q6GJD4"/>
<dbReference type="KEGG" id="sar:SAR0538"/>
<dbReference type="HOGENOM" id="CLU_190949_0_1_9"/>
<dbReference type="Proteomes" id="UP000000596">
    <property type="component" value="Chromosome"/>
</dbReference>
<dbReference type="GO" id="GO:0005737">
    <property type="term" value="C:cytoplasm"/>
    <property type="evidence" value="ECO:0007669"/>
    <property type="project" value="UniProtKB-ARBA"/>
</dbReference>
<dbReference type="GO" id="GO:1990904">
    <property type="term" value="C:ribonucleoprotein complex"/>
    <property type="evidence" value="ECO:0007669"/>
    <property type="project" value="UniProtKB-KW"/>
</dbReference>
<dbReference type="GO" id="GO:0005840">
    <property type="term" value="C:ribosome"/>
    <property type="evidence" value="ECO:0007669"/>
    <property type="project" value="UniProtKB-KW"/>
</dbReference>
<dbReference type="GO" id="GO:0003735">
    <property type="term" value="F:structural constituent of ribosome"/>
    <property type="evidence" value="ECO:0007669"/>
    <property type="project" value="InterPro"/>
</dbReference>
<dbReference type="GO" id="GO:0006412">
    <property type="term" value="P:translation"/>
    <property type="evidence" value="ECO:0007669"/>
    <property type="project" value="UniProtKB-UniRule"/>
</dbReference>
<dbReference type="Gene3D" id="2.20.28.120">
    <property type="entry name" value="Ribosomal protein L33"/>
    <property type="match status" value="1"/>
</dbReference>
<dbReference type="HAMAP" id="MF_00294">
    <property type="entry name" value="Ribosomal_bL33"/>
    <property type="match status" value="1"/>
</dbReference>
<dbReference type="InterPro" id="IPR001705">
    <property type="entry name" value="Ribosomal_bL33"/>
</dbReference>
<dbReference type="InterPro" id="IPR018264">
    <property type="entry name" value="Ribosomal_bL33_CS"/>
</dbReference>
<dbReference type="InterPro" id="IPR038584">
    <property type="entry name" value="Ribosomal_bL33_sf"/>
</dbReference>
<dbReference type="InterPro" id="IPR011332">
    <property type="entry name" value="Ribosomal_zn-bd"/>
</dbReference>
<dbReference type="NCBIfam" id="NF001764">
    <property type="entry name" value="PRK00504.1"/>
    <property type="match status" value="1"/>
</dbReference>
<dbReference type="NCBIfam" id="TIGR01023">
    <property type="entry name" value="rpmG_bact"/>
    <property type="match status" value="1"/>
</dbReference>
<dbReference type="Pfam" id="PF00471">
    <property type="entry name" value="Ribosomal_L33"/>
    <property type="match status" value="1"/>
</dbReference>
<dbReference type="SUPFAM" id="SSF57829">
    <property type="entry name" value="Zn-binding ribosomal proteins"/>
    <property type="match status" value="1"/>
</dbReference>
<dbReference type="PROSITE" id="PS00582">
    <property type="entry name" value="RIBOSOMAL_L33"/>
    <property type="match status" value="1"/>
</dbReference>